<feature type="chain" id="PRO_0000140065" description="Glutamyl-tRNA(Gln) amidotransferase subunit D">
    <location>
        <begin position="1"/>
        <end position="448"/>
    </location>
</feature>
<feature type="domain" description="Asparaginase/glutaminase" evidence="2">
    <location>
        <begin position="92"/>
        <end position="423"/>
    </location>
</feature>
<feature type="active site" evidence="1">
    <location>
        <position position="102"/>
    </location>
</feature>
<feature type="active site" evidence="1">
    <location>
        <position position="178"/>
    </location>
</feature>
<feature type="active site" evidence="1">
    <location>
        <position position="179"/>
    </location>
</feature>
<feature type="active site" evidence="1">
    <location>
        <position position="257"/>
    </location>
</feature>
<comment type="function">
    <text evidence="1">Allows the formation of correctly charged Gln-tRNA(Gln) through the transamidation of misacylated Glu-tRNA(Gln) in organisms which lack glutaminyl-tRNA synthetase. The reaction takes place in the presence of glutamine and ATP through an activated gamma-phospho-Glu-tRNA(Gln). The GatDE system is specific for glutamate and does not act on aspartate.</text>
</comment>
<comment type="catalytic activity">
    <reaction evidence="1">
        <text>L-glutamyl-tRNA(Gln) + L-glutamine + ATP + H2O = L-glutaminyl-tRNA(Gln) + L-glutamate + ADP + phosphate + H(+)</text>
        <dbReference type="Rhea" id="RHEA:17521"/>
        <dbReference type="Rhea" id="RHEA-COMP:9681"/>
        <dbReference type="Rhea" id="RHEA-COMP:9684"/>
        <dbReference type="ChEBI" id="CHEBI:15377"/>
        <dbReference type="ChEBI" id="CHEBI:15378"/>
        <dbReference type="ChEBI" id="CHEBI:29985"/>
        <dbReference type="ChEBI" id="CHEBI:30616"/>
        <dbReference type="ChEBI" id="CHEBI:43474"/>
        <dbReference type="ChEBI" id="CHEBI:58359"/>
        <dbReference type="ChEBI" id="CHEBI:78520"/>
        <dbReference type="ChEBI" id="CHEBI:78521"/>
        <dbReference type="ChEBI" id="CHEBI:456216"/>
    </reaction>
</comment>
<comment type="subunit">
    <text evidence="1">Heterodimer of GatD and GatE.</text>
</comment>
<comment type="similarity">
    <text evidence="1">Belongs to the asparaginase 1 family. GatD subfamily.</text>
</comment>
<protein>
    <recommendedName>
        <fullName evidence="1">Glutamyl-tRNA(Gln) amidotransferase subunit D</fullName>
        <shortName evidence="1">Glu-ADT subunit D</shortName>
        <ecNumber evidence="1">6.3.5.-</ecNumber>
    </recommendedName>
</protein>
<sequence>MLEGYRGKALEFLSSHNVDVGDLIELQKDGLSIKGVVMPSYSKEDDIIVIKLDNGYNIGVSISGISNFKLVEKKRQNIQVNKGEQKPLKEKSEVKIISTGGTIVSKVEYETGAVRPALTTEEIINFMPEINEIAKIDAEVLFSILSENMKPEYWIKIAESAKKALDEGNLGVVIAHGTDTMAYTASALAFSFKSLTGPIVLVGSQRSSDRPSSDSPINLYSAILVAKNSPFAEVTINMHGESSDTYTLVHRGVKVRKMHTSRRDAFQSINDIPLAKVFWKEKEIKLLRNDYIKRKEENALDAKFDTRVFLLKYYPGINPEIIEYLISSGIRGIIVEGTGLGHTSTEFVDYFKKATKDGVFIGMTSQCLFGRVNMNVYTTGRLLQESGVTPLEDMLPETALVKLMWVLAHESDLDKIRSLMLTNFVGEINYRHVPEYFPRWFHDGIRLQ</sequence>
<dbReference type="EC" id="6.3.5.-" evidence="1"/>
<dbReference type="EMBL" id="BA000023">
    <property type="protein sequence ID" value="BAB66305.1"/>
    <property type="molecule type" value="Genomic_DNA"/>
</dbReference>
<dbReference type="RefSeq" id="WP_010979283.1">
    <property type="nucleotide sequence ID" value="NC_003106.2"/>
</dbReference>
<dbReference type="SMR" id="Q971W5"/>
<dbReference type="STRING" id="273063.STK_12640"/>
<dbReference type="GeneID" id="1459263"/>
<dbReference type="KEGG" id="sto:STK_12640"/>
<dbReference type="PATRIC" id="fig|273063.9.peg.1421"/>
<dbReference type="eggNOG" id="arCOG01924">
    <property type="taxonomic scope" value="Archaea"/>
</dbReference>
<dbReference type="OrthoDB" id="371959at2157"/>
<dbReference type="Proteomes" id="UP000001015">
    <property type="component" value="Chromosome"/>
</dbReference>
<dbReference type="GO" id="GO:0004067">
    <property type="term" value="F:asparaginase activity"/>
    <property type="evidence" value="ECO:0007669"/>
    <property type="project" value="InterPro"/>
</dbReference>
<dbReference type="GO" id="GO:0005524">
    <property type="term" value="F:ATP binding"/>
    <property type="evidence" value="ECO:0007669"/>
    <property type="project" value="UniProtKB-KW"/>
</dbReference>
<dbReference type="GO" id="GO:0050567">
    <property type="term" value="F:glutaminyl-tRNA synthase (glutamine-hydrolyzing) activity"/>
    <property type="evidence" value="ECO:0007669"/>
    <property type="project" value="UniProtKB-UniRule"/>
</dbReference>
<dbReference type="GO" id="GO:0006520">
    <property type="term" value="P:amino acid metabolic process"/>
    <property type="evidence" value="ECO:0007669"/>
    <property type="project" value="InterPro"/>
</dbReference>
<dbReference type="GO" id="GO:0006450">
    <property type="term" value="P:regulation of translational fidelity"/>
    <property type="evidence" value="ECO:0007669"/>
    <property type="project" value="InterPro"/>
</dbReference>
<dbReference type="GO" id="GO:0006412">
    <property type="term" value="P:translation"/>
    <property type="evidence" value="ECO:0007669"/>
    <property type="project" value="UniProtKB-UniRule"/>
</dbReference>
<dbReference type="CDD" id="cd08962">
    <property type="entry name" value="GatD"/>
    <property type="match status" value="1"/>
</dbReference>
<dbReference type="Gene3D" id="2.30.30.520">
    <property type="match status" value="1"/>
</dbReference>
<dbReference type="Gene3D" id="3.40.50.40">
    <property type="match status" value="1"/>
</dbReference>
<dbReference type="Gene3D" id="3.40.50.1170">
    <property type="entry name" value="L-asparaginase, N-terminal domain"/>
    <property type="match status" value="1"/>
</dbReference>
<dbReference type="HAMAP" id="MF_00586">
    <property type="entry name" value="GatD"/>
    <property type="match status" value="1"/>
</dbReference>
<dbReference type="InterPro" id="IPR006033">
    <property type="entry name" value="AsnA_fam"/>
</dbReference>
<dbReference type="InterPro" id="IPR036152">
    <property type="entry name" value="Asp/glu_Ase-like_sf"/>
</dbReference>
<dbReference type="InterPro" id="IPR006034">
    <property type="entry name" value="Asparaginase/glutaminase-like"/>
</dbReference>
<dbReference type="InterPro" id="IPR027475">
    <property type="entry name" value="Asparaginase/glutaminase_AS2"/>
</dbReference>
<dbReference type="InterPro" id="IPR040919">
    <property type="entry name" value="Asparaginase_C"/>
</dbReference>
<dbReference type="InterPro" id="IPR011878">
    <property type="entry name" value="GatD"/>
</dbReference>
<dbReference type="InterPro" id="IPR040918">
    <property type="entry name" value="GatD_N"/>
</dbReference>
<dbReference type="InterPro" id="IPR037222">
    <property type="entry name" value="GatD_N_sf"/>
</dbReference>
<dbReference type="InterPro" id="IPR027473">
    <property type="entry name" value="L-asparaginase_C"/>
</dbReference>
<dbReference type="InterPro" id="IPR027474">
    <property type="entry name" value="L-asparaginase_N"/>
</dbReference>
<dbReference type="InterPro" id="IPR037152">
    <property type="entry name" value="L-asparaginase_N_sf"/>
</dbReference>
<dbReference type="NCBIfam" id="TIGR00519">
    <property type="entry name" value="asnASE_I"/>
    <property type="match status" value="1"/>
</dbReference>
<dbReference type="NCBIfam" id="TIGR02153">
    <property type="entry name" value="gatD_arch"/>
    <property type="match status" value="1"/>
</dbReference>
<dbReference type="NCBIfam" id="NF003217">
    <property type="entry name" value="PRK04183.1"/>
    <property type="match status" value="1"/>
</dbReference>
<dbReference type="PANTHER" id="PTHR11707:SF28">
    <property type="entry name" value="60 KDA LYSOPHOSPHOLIPASE"/>
    <property type="match status" value="1"/>
</dbReference>
<dbReference type="PANTHER" id="PTHR11707">
    <property type="entry name" value="L-ASPARAGINASE"/>
    <property type="match status" value="1"/>
</dbReference>
<dbReference type="Pfam" id="PF00710">
    <property type="entry name" value="Asparaginase"/>
    <property type="match status" value="1"/>
</dbReference>
<dbReference type="Pfam" id="PF17763">
    <property type="entry name" value="Asparaginase_C"/>
    <property type="match status" value="1"/>
</dbReference>
<dbReference type="Pfam" id="PF18195">
    <property type="entry name" value="GatD_N"/>
    <property type="match status" value="1"/>
</dbReference>
<dbReference type="PIRSF" id="PIRSF500175">
    <property type="entry name" value="Glu_ADT_D"/>
    <property type="match status" value="1"/>
</dbReference>
<dbReference type="PIRSF" id="PIRSF001220">
    <property type="entry name" value="L-ASNase_gatD"/>
    <property type="match status" value="1"/>
</dbReference>
<dbReference type="PRINTS" id="PR00139">
    <property type="entry name" value="ASNGLNASE"/>
</dbReference>
<dbReference type="SMART" id="SM00870">
    <property type="entry name" value="Asparaginase"/>
    <property type="match status" value="1"/>
</dbReference>
<dbReference type="SUPFAM" id="SSF141300">
    <property type="entry name" value="GatD N-terminal domain-like"/>
    <property type="match status" value="1"/>
</dbReference>
<dbReference type="SUPFAM" id="SSF53774">
    <property type="entry name" value="Glutaminase/Asparaginase"/>
    <property type="match status" value="1"/>
</dbReference>
<dbReference type="PROSITE" id="PS00917">
    <property type="entry name" value="ASN_GLN_ASE_2"/>
    <property type="match status" value="1"/>
</dbReference>
<dbReference type="PROSITE" id="PS51732">
    <property type="entry name" value="ASN_GLN_ASE_3"/>
    <property type="match status" value="1"/>
</dbReference>
<gene>
    <name evidence="1" type="primary">gatD</name>
    <name type="ordered locus">STK_12640</name>
</gene>
<proteinExistence type="inferred from homology"/>
<keyword id="KW-0067">ATP-binding</keyword>
<keyword id="KW-0436">Ligase</keyword>
<keyword id="KW-0547">Nucleotide-binding</keyword>
<keyword id="KW-0648">Protein biosynthesis</keyword>
<keyword id="KW-1185">Reference proteome</keyword>
<evidence type="ECO:0000255" key="1">
    <source>
        <dbReference type="HAMAP-Rule" id="MF_00586"/>
    </source>
</evidence>
<evidence type="ECO:0000255" key="2">
    <source>
        <dbReference type="PROSITE-ProRule" id="PRU01068"/>
    </source>
</evidence>
<accession>Q971W5</accession>
<reference key="1">
    <citation type="journal article" date="2001" name="DNA Res.">
        <title>Complete genome sequence of an aerobic thermoacidophilic Crenarchaeon, Sulfolobus tokodaii strain7.</title>
        <authorList>
            <person name="Kawarabayasi Y."/>
            <person name="Hino Y."/>
            <person name="Horikawa H."/>
            <person name="Jin-no K."/>
            <person name="Takahashi M."/>
            <person name="Sekine M."/>
            <person name="Baba S."/>
            <person name="Ankai A."/>
            <person name="Kosugi H."/>
            <person name="Hosoyama A."/>
            <person name="Fukui S."/>
            <person name="Nagai Y."/>
            <person name="Nishijima K."/>
            <person name="Otsuka R."/>
            <person name="Nakazawa H."/>
            <person name="Takamiya M."/>
            <person name="Kato Y."/>
            <person name="Yoshizawa T."/>
            <person name="Tanaka T."/>
            <person name="Kudoh Y."/>
            <person name="Yamazaki J."/>
            <person name="Kushida N."/>
            <person name="Oguchi A."/>
            <person name="Aoki K."/>
            <person name="Masuda S."/>
            <person name="Yanagii M."/>
            <person name="Nishimura M."/>
            <person name="Yamagishi A."/>
            <person name="Oshima T."/>
            <person name="Kikuchi H."/>
        </authorList>
    </citation>
    <scope>NUCLEOTIDE SEQUENCE [LARGE SCALE GENOMIC DNA]</scope>
    <source>
        <strain>DSM 16993 / JCM 10545 / NBRC 100140 / 7</strain>
    </source>
</reference>
<organism>
    <name type="scientific">Sulfurisphaera tokodaii (strain DSM 16993 / JCM 10545 / NBRC 100140 / 7)</name>
    <name type="common">Sulfolobus tokodaii</name>
    <dbReference type="NCBI Taxonomy" id="273063"/>
    <lineage>
        <taxon>Archaea</taxon>
        <taxon>Thermoproteota</taxon>
        <taxon>Thermoprotei</taxon>
        <taxon>Sulfolobales</taxon>
        <taxon>Sulfolobaceae</taxon>
        <taxon>Sulfurisphaera</taxon>
    </lineage>
</organism>
<name>GATD_SULTO</name>